<dbReference type="EMBL" id="CP001164">
    <property type="protein sequence ID" value="ACI36793.1"/>
    <property type="molecule type" value="Genomic_DNA"/>
</dbReference>
<dbReference type="RefSeq" id="WP_001160737.1">
    <property type="nucleotide sequence ID" value="NC_011353.1"/>
</dbReference>
<dbReference type="SMR" id="B5YSG2"/>
<dbReference type="KEGG" id="ecf:ECH74115_1027"/>
<dbReference type="HOGENOM" id="CLU_117144_3_0_6"/>
<dbReference type="Gene3D" id="3.30.110.70">
    <property type="entry name" value="Hypothetical protein apc22750. Chain B"/>
    <property type="match status" value="1"/>
</dbReference>
<dbReference type="HAMAP" id="MF_00338">
    <property type="entry name" value="UPF0145"/>
    <property type="match status" value="1"/>
</dbReference>
<dbReference type="InterPro" id="IPR035439">
    <property type="entry name" value="UPF0145_dom_sf"/>
</dbReference>
<dbReference type="InterPro" id="IPR002765">
    <property type="entry name" value="UPF0145_YbjQ-like"/>
</dbReference>
<dbReference type="NCBIfam" id="NF002776">
    <property type="entry name" value="PRK02877.1"/>
    <property type="match status" value="1"/>
</dbReference>
<dbReference type="PANTHER" id="PTHR34068">
    <property type="entry name" value="UPF0145 PROTEIN YBJQ"/>
    <property type="match status" value="1"/>
</dbReference>
<dbReference type="PANTHER" id="PTHR34068:SF1">
    <property type="entry name" value="UPF0145 PROTEIN YBJQ"/>
    <property type="match status" value="1"/>
</dbReference>
<dbReference type="Pfam" id="PF01906">
    <property type="entry name" value="YbjQ_1"/>
    <property type="match status" value="1"/>
</dbReference>
<dbReference type="SUPFAM" id="SSF117782">
    <property type="entry name" value="YbjQ-like"/>
    <property type="match status" value="1"/>
</dbReference>
<protein>
    <recommendedName>
        <fullName evidence="1">UPF0145 protein YbjQ</fullName>
    </recommendedName>
</protein>
<name>YBJQ_ECO5E</name>
<feature type="chain" id="PRO_1000119990" description="UPF0145 protein YbjQ">
    <location>
        <begin position="1"/>
        <end position="107"/>
    </location>
</feature>
<organism>
    <name type="scientific">Escherichia coli O157:H7 (strain EC4115 / EHEC)</name>
    <dbReference type="NCBI Taxonomy" id="444450"/>
    <lineage>
        <taxon>Bacteria</taxon>
        <taxon>Pseudomonadati</taxon>
        <taxon>Pseudomonadota</taxon>
        <taxon>Gammaproteobacteria</taxon>
        <taxon>Enterobacterales</taxon>
        <taxon>Enterobacteriaceae</taxon>
        <taxon>Escherichia</taxon>
    </lineage>
</organism>
<comment type="similarity">
    <text evidence="1">Belongs to the UPF0145 family.</text>
</comment>
<reference key="1">
    <citation type="journal article" date="2011" name="Proc. Natl. Acad. Sci. U.S.A.">
        <title>Genomic anatomy of Escherichia coli O157:H7 outbreaks.</title>
        <authorList>
            <person name="Eppinger M."/>
            <person name="Mammel M.K."/>
            <person name="Leclerc J.E."/>
            <person name="Ravel J."/>
            <person name="Cebula T.A."/>
        </authorList>
    </citation>
    <scope>NUCLEOTIDE SEQUENCE [LARGE SCALE GENOMIC DNA]</scope>
    <source>
        <strain>EC4115 / EHEC</strain>
    </source>
</reference>
<proteinExistence type="inferred from homology"/>
<accession>B5YSG2</accession>
<evidence type="ECO:0000255" key="1">
    <source>
        <dbReference type="HAMAP-Rule" id="MF_00338"/>
    </source>
</evidence>
<sequence>MQFSTTPTLEGQTIVEYCGVVTGEAILGANIFRDFFAGIRDIVGGRSGAYEKELRKAREIAFEELGSQARALGADAVVGIDIDYETVGQNGSMLMVSVSGTAVKTRR</sequence>
<gene>
    <name evidence="1" type="primary">ybjQ</name>
    <name type="ordered locus">ECH74115_1027</name>
</gene>